<comment type="catalytic activity">
    <reaction evidence="1">
        <text>D-arabinose 5-phosphate + phosphoenolpyruvate + H2O = 3-deoxy-alpha-D-manno-2-octulosonate-8-phosphate + phosphate</text>
        <dbReference type="Rhea" id="RHEA:14053"/>
        <dbReference type="ChEBI" id="CHEBI:15377"/>
        <dbReference type="ChEBI" id="CHEBI:43474"/>
        <dbReference type="ChEBI" id="CHEBI:57693"/>
        <dbReference type="ChEBI" id="CHEBI:58702"/>
        <dbReference type="ChEBI" id="CHEBI:85985"/>
        <dbReference type="EC" id="2.5.1.55"/>
    </reaction>
</comment>
<comment type="pathway">
    <text evidence="1">Carbohydrate biosynthesis; 3-deoxy-D-manno-octulosonate biosynthesis; 3-deoxy-D-manno-octulosonate from D-ribulose 5-phosphate: step 2/3.</text>
</comment>
<comment type="pathway">
    <text evidence="1">Bacterial outer membrane biogenesis; lipopolysaccharide biosynthesis.</text>
</comment>
<comment type="subcellular location">
    <subcellularLocation>
        <location evidence="1">Cytoplasm</location>
    </subcellularLocation>
</comment>
<comment type="similarity">
    <text evidence="1">Belongs to the KdsA family.</text>
</comment>
<evidence type="ECO:0000255" key="1">
    <source>
        <dbReference type="HAMAP-Rule" id="MF_00056"/>
    </source>
</evidence>
<protein>
    <recommendedName>
        <fullName evidence="1">2-dehydro-3-deoxyphosphooctonate aldolase</fullName>
        <ecNumber evidence="1">2.5.1.55</ecNumber>
    </recommendedName>
    <alternativeName>
        <fullName evidence="1">3-deoxy-D-manno-octulosonic acid 8-phosphate synthase</fullName>
    </alternativeName>
    <alternativeName>
        <fullName evidence="1">KDO-8-phosphate synthase</fullName>
        <shortName evidence="1">KDO 8-P synthase</shortName>
        <shortName evidence="1">KDOPS</shortName>
    </alternativeName>
    <alternativeName>
        <fullName evidence="1">Phospho-2-dehydro-3-deoxyoctonate aldolase</fullName>
    </alternativeName>
</protein>
<keyword id="KW-0963">Cytoplasm</keyword>
<keyword id="KW-0448">Lipopolysaccharide biosynthesis</keyword>
<keyword id="KW-0808">Transferase</keyword>
<dbReference type="EC" id="2.5.1.55" evidence="1"/>
<dbReference type="EMBL" id="CP000283">
    <property type="protein sequence ID" value="ABE40048.1"/>
    <property type="molecule type" value="Genomic_DNA"/>
</dbReference>
<dbReference type="SMR" id="Q136E1"/>
<dbReference type="STRING" id="316057.RPD_2820"/>
<dbReference type="KEGG" id="rpd:RPD_2820"/>
<dbReference type="eggNOG" id="COG2877">
    <property type="taxonomic scope" value="Bacteria"/>
</dbReference>
<dbReference type="HOGENOM" id="CLU_036666_0_0_5"/>
<dbReference type="BioCyc" id="RPAL316057:RPD_RS14165-MONOMER"/>
<dbReference type="UniPathway" id="UPA00030"/>
<dbReference type="UniPathway" id="UPA00357">
    <property type="reaction ID" value="UER00474"/>
</dbReference>
<dbReference type="Proteomes" id="UP000001818">
    <property type="component" value="Chromosome"/>
</dbReference>
<dbReference type="GO" id="GO:0005737">
    <property type="term" value="C:cytoplasm"/>
    <property type="evidence" value="ECO:0007669"/>
    <property type="project" value="UniProtKB-SubCell"/>
</dbReference>
<dbReference type="GO" id="GO:0008676">
    <property type="term" value="F:3-deoxy-8-phosphooctulonate synthase activity"/>
    <property type="evidence" value="ECO:0007669"/>
    <property type="project" value="UniProtKB-UniRule"/>
</dbReference>
<dbReference type="GO" id="GO:0019294">
    <property type="term" value="P:keto-3-deoxy-D-manno-octulosonic acid biosynthetic process"/>
    <property type="evidence" value="ECO:0007669"/>
    <property type="project" value="UniProtKB-UniRule"/>
</dbReference>
<dbReference type="Gene3D" id="3.20.20.70">
    <property type="entry name" value="Aldolase class I"/>
    <property type="match status" value="1"/>
</dbReference>
<dbReference type="HAMAP" id="MF_00056">
    <property type="entry name" value="KDO8P_synth"/>
    <property type="match status" value="1"/>
</dbReference>
<dbReference type="InterPro" id="IPR013785">
    <property type="entry name" value="Aldolase_TIM"/>
</dbReference>
<dbReference type="InterPro" id="IPR006218">
    <property type="entry name" value="DAHP1/KDSA"/>
</dbReference>
<dbReference type="InterPro" id="IPR006269">
    <property type="entry name" value="KDO8P_synthase"/>
</dbReference>
<dbReference type="NCBIfam" id="TIGR01362">
    <property type="entry name" value="KDO8P_synth"/>
    <property type="match status" value="1"/>
</dbReference>
<dbReference type="NCBIfam" id="NF003543">
    <property type="entry name" value="PRK05198.1"/>
    <property type="match status" value="1"/>
</dbReference>
<dbReference type="PANTHER" id="PTHR21057">
    <property type="entry name" value="PHOSPHO-2-DEHYDRO-3-DEOXYHEPTONATE ALDOLASE"/>
    <property type="match status" value="1"/>
</dbReference>
<dbReference type="Pfam" id="PF00793">
    <property type="entry name" value="DAHP_synth_1"/>
    <property type="match status" value="1"/>
</dbReference>
<dbReference type="SUPFAM" id="SSF51569">
    <property type="entry name" value="Aldolase"/>
    <property type="match status" value="1"/>
</dbReference>
<name>KDSA_RHOPS</name>
<sequence>MNKSIAPAPVVAAGDVKFGNSLPLSVIAGPCQLESRAHALEVASALKEIATRLGIGLVYKTSFDKANRTSAASARGIGLDAALAIFAEIRDSVGLPVLTDVHEAEQCARAAEAVDILQIPAFLCRQTDLLLAAAATGRIVNVKKGQFLAPWDMGNVVAKITTAGNQKVLVTERGASFGYNTLVSDMRALPIMARTTGAPVIFDATHSVQQPGGKGTSSGGEREFVPVLARAAVAVGVAGVFIETHPDPDHAPSDGPNMVPLRDFEALLRTLMEFDALAKKRPGAGTI</sequence>
<proteinExistence type="inferred from homology"/>
<accession>Q136E1</accession>
<feature type="chain" id="PRO_0000304480" description="2-dehydro-3-deoxyphosphooctonate aldolase">
    <location>
        <begin position="1"/>
        <end position="287"/>
    </location>
</feature>
<gene>
    <name evidence="1" type="primary">kdsA</name>
    <name type="ordered locus">RPD_2820</name>
</gene>
<reference key="1">
    <citation type="submission" date="2006-03" db="EMBL/GenBank/DDBJ databases">
        <title>Complete sequence of Rhodopseudomonas palustris BisB5.</title>
        <authorList>
            <consortium name="US DOE Joint Genome Institute"/>
            <person name="Copeland A."/>
            <person name="Lucas S."/>
            <person name="Lapidus A."/>
            <person name="Barry K."/>
            <person name="Detter J.C."/>
            <person name="Glavina del Rio T."/>
            <person name="Hammon N."/>
            <person name="Israni S."/>
            <person name="Dalin E."/>
            <person name="Tice H."/>
            <person name="Pitluck S."/>
            <person name="Chain P."/>
            <person name="Malfatti S."/>
            <person name="Shin M."/>
            <person name="Vergez L."/>
            <person name="Schmutz J."/>
            <person name="Larimer F."/>
            <person name="Land M."/>
            <person name="Hauser L."/>
            <person name="Pelletier D.A."/>
            <person name="Kyrpides N."/>
            <person name="Lykidis A."/>
            <person name="Oda Y."/>
            <person name="Harwood C.S."/>
            <person name="Richardson P."/>
        </authorList>
    </citation>
    <scope>NUCLEOTIDE SEQUENCE [LARGE SCALE GENOMIC DNA]</scope>
    <source>
        <strain>BisB5</strain>
    </source>
</reference>
<organism>
    <name type="scientific">Rhodopseudomonas palustris (strain BisB5)</name>
    <dbReference type="NCBI Taxonomy" id="316057"/>
    <lineage>
        <taxon>Bacteria</taxon>
        <taxon>Pseudomonadati</taxon>
        <taxon>Pseudomonadota</taxon>
        <taxon>Alphaproteobacteria</taxon>
        <taxon>Hyphomicrobiales</taxon>
        <taxon>Nitrobacteraceae</taxon>
        <taxon>Rhodopseudomonas</taxon>
    </lineage>
</organism>